<reference key="1">
    <citation type="book" date="2003" name="Advances in legume systematics - part 10">
        <title>Phylogenetic analyses of tribes Trifolieae and Vicieae based on sequences of the plastid gene matK (Papilionoideae: Leguminosae).</title>
        <editorList>
            <person name="Klitgaard B.B."/>
            <person name="Bruneau A."/>
        </editorList>
        <authorList>
            <person name="Steele K.P."/>
            <person name="Wojciechowski M.F."/>
        </authorList>
    </citation>
    <scope>NUCLEOTIDE SEQUENCE [GENOMIC DNA]</scope>
</reference>
<gene>
    <name evidence="1" type="primary">matK</name>
</gene>
<organism>
    <name type="scientific">Vicia villosa</name>
    <name type="common">Hairy vetch</name>
    <dbReference type="NCBI Taxonomy" id="3911"/>
    <lineage>
        <taxon>Eukaryota</taxon>
        <taxon>Viridiplantae</taxon>
        <taxon>Streptophyta</taxon>
        <taxon>Embryophyta</taxon>
        <taxon>Tracheophyta</taxon>
        <taxon>Spermatophyta</taxon>
        <taxon>Magnoliopsida</taxon>
        <taxon>eudicotyledons</taxon>
        <taxon>Gunneridae</taxon>
        <taxon>Pentapetalae</taxon>
        <taxon>rosids</taxon>
        <taxon>fabids</taxon>
        <taxon>Fabales</taxon>
        <taxon>Fabaceae</taxon>
        <taxon>Papilionoideae</taxon>
        <taxon>50 kb inversion clade</taxon>
        <taxon>NPAAA clade</taxon>
        <taxon>Hologalegina</taxon>
        <taxon>IRL clade</taxon>
        <taxon>Fabeae</taxon>
        <taxon>Vicia</taxon>
    </lineage>
</organism>
<evidence type="ECO:0000255" key="1">
    <source>
        <dbReference type="HAMAP-Rule" id="MF_01390"/>
    </source>
</evidence>
<sequence>MQVYLERARSRQQDFLYPLLFREYIYGLAYSHHLNRSIFVENVGYDNKYSLLIVKRLITRMYQQNHFIISANDSNKNAFWGYNKNFYSQIISEGFAIVVEIPFFLQLSSSLEEAEIIQYYKNLRSIHSIFPFLEDKMTYLNYVSDIRIPYPMHLEILVQILRYWVKDAPFFHFLRLFLYNFCNWNSFITTKKSISTFSKSNPRFFLFLYNFYVCEYESIFVFLRNKSSHLRLKSFSVFFERIFFYAKREHLVKVFSKDFSYTFTFFKDPYIHYVRYQGKCILASKNAPFLMNKWNHYFLHLWQCFFDVWSQPRMININPLSEHSFQLLGYFSNVRLNRSVVRSQMLQNTFLIEIVIKKLDIIVPIIPLIRSLAKAKFCNVLGQXISKPVWADSSDFDIIDRFLRICRSLSHYYNGSSKKKSLYRIKYILRFSCIKTLACKHKSTVRAFLKRSGSEELLQEFFTEEEDIFSLIFPRDSSTLQRLHRNRIWYLDILFSNDLVHDE</sequence>
<keyword id="KW-0150">Chloroplast</keyword>
<keyword id="KW-0507">mRNA processing</keyword>
<keyword id="KW-0934">Plastid</keyword>
<keyword id="KW-0694">RNA-binding</keyword>
<keyword id="KW-0819">tRNA processing</keyword>
<dbReference type="EMBL" id="AF522161">
    <property type="protein sequence ID" value="AAM82153.1"/>
    <property type="molecule type" value="Genomic_DNA"/>
</dbReference>
<dbReference type="GO" id="GO:0009507">
    <property type="term" value="C:chloroplast"/>
    <property type="evidence" value="ECO:0007669"/>
    <property type="project" value="UniProtKB-SubCell"/>
</dbReference>
<dbReference type="GO" id="GO:0003723">
    <property type="term" value="F:RNA binding"/>
    <property type="evidence" value="ECO:0007669"/>
    <property type="project" value="UniProtKB-KW"/>
</dbReference>
<dbReference type="GO" id="GO:0006397">
    <property type="term" value="P:mRNA processing"/>
    <property type="evidence" value="ECO:0007669"/>
    <property type="project" value="UniProtKB-KW"/>
</dbReference>
<dbReference type="GO" id="GO:0008380">
    <property type="term" value="P:RNA splicing"/>
    <property type="evidence" value="ECO:0007669"/>
    <property type="project" value="UniProtKB-UniRule"/>
</dbReference>
<dbReference type="GO" id="GO:0008033">
    <property type="term" value="P:tRNA processing"/>
    <property type="evidence" value="ECO:0007669"/>
    <property type="project" value="UniProtKB-KW"/>
</dbReference>
<dbReference type="HAMAP" id="MF_01390">
    <property type="entry name" value="MatK"/>
    <property type="match status" value="1"/>
</dbReference>
<dbReference type="InterPro" id="IPR024937">
    <property type="entry name" value="Domain_X"/>
</dbReference>
<dbReference type="InterPro" id="IPR002866">
    <property type="entry name" value="Maturase_MatK"/>
</dbReference>
<dbReference type="InterPro" id="IPR024942">
    <property type="entry name" value="Maturase_MatK_N"/>
</dbReference>
<dbReference type="PANTHER" id="PTHR34811">
    <property type="entry name" value="MATURASE K"/>
    <property type="match status" value="1"/>
</dbReference>
<dbReference type="PANTHER" id="PTHR34811:SF1">
    <property type="entry name" value="MATURASE K"/>
    <property type="match status" value="1"/>
</dbReference>
<dbReference type="Pfam" id="PF01348">
    <property type="entry name" value="Intron_maturas2"/>
    <property type="match status" value="1"/>
</dbReference>
<dbReference type="Pfam" id="PF01824">
    <property type="entry name" value="MatK_N"/>
    <property type="match status" value="1"/>
</dbReference>
<accession>Q8MCJ4</accession>
<proteinExistence type="inferred from homology"/>
<name>MATK_VICVI</name>
<protein>
    <recommendedName>
        <fullName evidence="1">Maturase K</fullName>
    </recommendedName>
    <alternativeName>
        <fullName evidence="1">Intron maturase</fullName>
    </alternativeName>
</protein>
<feature type="chain" id="PRO_0000143784" description="Maturase K">
    <location>
        <begin position="1"/>
        <end position="503"/>
    </location>
</feature>
<comment type="function">
    <text evidence="1">Usually encoded in the trnK tRNA gene intron. Probably assists in splicing its own and other chloroplast group II introns.</text>
</comment>
<comment type="subcellular location">
    <subcellularLocation>
        <location>Plastid</location>
        <location>Chloroplast</location>
    </subcellularLocation>
</comment>
<comment type="similarity">
    <text evidence="1">Belongs to the intron maturase 2 family. MatK subfamily.</text>
</comment>
<geneLocation type="chloroplast"/>